<keyword id="KW-0963">Cytoplasm</keyword>
<keyword id="KW-0690">Ribosome biogenesis</keyword>
<keyword id="KW-0694">RNA-binding</keyword>
<keyword id="KW-0699">rRNA-binding</keyword>
<proteinExistence type="inferred from homology"/>
<feature type="chain" id="PRO_1000212888" description="Dual-action ribosomal maturation protein DarP">
    <location>
        <begin position="1"/>
        <end position="183"/>
    </location>
</feature>
<evidence type="ECO:0000255" key="1">
    <source>
        <dbReference type="HAMAP-Rule" id="MF_00765"/>
    </source>
</evidence>
<accession>C4ZRA8</accession>
<comment type="function">
    <text evidence="1">Member of a network of 50S ribosomal subunit biogenesis factors which assembles along the 30S-50S interface, preventing incorrect 23S rRNA structures from forming. Promotes peptidyl transferase center (PTC) maturation.</text>
</comment>
<comment type="subcellular location">
    <subcellularLocation>
        <location evidence="1">Cytoplasm</location>
    </subcellularLocation>
    <text evidence="1">Associates with late stage pre-50S ribosomal subunits.</text>
</comment>
<comment type="similarity">
    <text evidence="1">Belongs to the DarP family.</text>
</comment>
<reference key="1">
    <citation type="journal article" date="2009" name="J. Bacteriol.">
        <title>Genomic sequencing reveals regulatory mutations and recombinational events in the widely used MC4100 lineage of Escherichia coli K-12.</title>
        <authorList>
            <person name="Ferenci T."/>
            <person name="Zhou Z."/>
            <person name="Betteridge T."/>
            <person name="Ren Y."/>
            <person name="Liu Y."/>
            <person name="Feng L."/>
            <person name="Reeves P.R."/>
            <person name="Wang L."/>
        </authorList>
    </citation>
    <scope>NUCLEOTIDE SEQUENCE [LARGE SCALE GENOMIC DNA]</scope>
    <source>
        <strain>K12 / MC4100 / BW2952</strain>
    </source>
</reference>
<gene>
    <name evidence="1" type="primary">darP</name>
    <name type="ordered locus">BWG_3943</name>
</gene>
<organism>
    <name type="scientific">Escherichia coli (strain K12 / MC4100 / BW2952)</name>
    <dbReference type="NCBI Taxonomy" id="595496"/>
    <lineage>
        <taxon>Bacteria</taxon>
        <taxon>Pseudomonadati</taxon>
        <taxon>Pseudomonadota</taxon>
        <taxon>Gammaproteobacteria</taxon>
        <taxon>Enterobacterales</taxon>
        <taxon>Enterobacteriaceae</taxon>
        <taxon>Escherichia</taxon>
    </lineage>
</organism>
<sequence length="183" mass="21359">MTKQPEDWLDDVPGDDIEDEDDEIIWVSKSEIKRDAEELKRLGAEIVDLGKNALDKIPLDADLRAAIELAQRIKMEGRRRQLQLIGKMLRQRDVEPIRQALDKLKNRHNQQVVLFHKLENLRDRLIDQGDDAIAEVLNLWPDADRQQLRTLIRNAKKEKEGNKPPKSARQIFQYLRELAENEG</sequence>
<name>DARP_ECOBW</name>
<dbReference type="EMBL" id="CP001396">
    <property type="protein sequence ID" value="ACR62408.1"/>
    <property type="molecule type" value="Genomic_DNA"/>
</dbReference>
<dbReference type="SMR" id="C4ZRA8"/>
<dbReference type="KEGG" id="ebw:BWG_3943"/>
<dbReference type="HOGENOM" id="CLU_106757_2_0_6"/>
<dbReference type="GO" id="GO:0005829">
    <property type="term" value="C:cytosol"/>
    <property type="evidence" value="ECO:0007669"/>
    <property type="project" value="TreeGrafter"/>
</dbReference>
<dbReference type="GO" id="GO:0043022">
    <property type="term" value="F:ribosome binding"/>
    <property type="evidence" value="ECO:0007669"/>
    <property type="project" value="UniProtKB-UniRule"/>
</dbReference>
<dbReference type="GO" id="GO:0019843">
    <property type="term" value="F:rRNA binding"/>
    <property type="evidence" value="ECO:0007669"/>
    <property type="project" value="UniProtKB-UniRule"/>
</dbReference>
<dbReference type="GO" id="GO:1902626">
    <property type="term" value="P:assembly of large subunit precursor of preribosome"/>
    <property type="evidence" value="ECO:0007669"/>
    <property type="project" value="UniProtKB-UniRule"/>
</dbReference>
<dbReference type="CDD" id="cd16331">
    <property type="entry name" value="YjgA-like"/>
    <property type="match status" value="1"/>
</dbReference>
<dbReference type="FunFam" id="1.10.60.30:FF:000001">
    <property type="entry name" value="UPF0307 protein YjgA"/>
    <property type="match status" value="1"/>
</dbReference>
<dbReference type="FunFam" id="1.10.60.30:FF:000002">
    <property type="entry name" value="UPF0307 protein YjgA"/>
    <property type="match status" value="1"/>
</dbReference>
<dbReference type="Gene3D" id="1.10.60.30">
    <property type="entry name" value="PSPTO4464-like domains"/>
    <property type="match status" value="2"/>
</dbReference>
<dbReference type="HAMAP" id="MF_00765">
    <property type="entry name" value="DarP"/>
    <property type="match status" value="1"/>
</dbReference>
<dbReference type="InterPro" id="IPR006839">
    <property type="entry name" value="DarP"/>
</dbReference>
<dbReference type="InterPro" id="IPR023153">
    <property type="entry name" value="DarP_sf"/>
</dbReference>
<dbReference type="NCBIfam" id="NF003593">
    <property type="entry name" value="PRK05255.1-1"/>
    <property type="match status" value="1"/>
</dbReference>
<dbReference type="PANTHER" id="PTHR38101">
    <property type="entry name" value="UPF0307 PROTEIN YJGA"/>
    <property type="match status" value="1"/>
</dbReference>
<dbReference type="PANTHER" id="PTHR38101:SF1">
    <property type="entry name" value="UPF0307 PROTEIN YJGA"/>
    <property type="match status" value="1"/>
</dbReference>
<dbReference type="Pfam" id="PF04751">
    <property type="entry name" value="DarP"/>
    <property type="match status" value="1"/>
</dbReference>
<dbReference type="PIRSF" id="PIRSF016183">
    <property type="entry name" value="UCP016183"/>
    <property type="match status" value="1"/>
</dbReference>
<dbReference type="SUPFAM" id="SSF158710">
    <property type="entry name" value="PSPTO4464-like"/>
    <property type="match status" value="1"/>
</dbReference>
<protein>
    <recommendedName>
        <fullName evidence="1">Dual-action ribosomal maturation protein DarP</fullName>
    </recommendedName>
    <alternativeName>
        <fullName evidence="1">Large ribosomal subunit assembly factor DarP</fullName>
    </alternativeName>
</protein>